<protein>
    <recommendedName>
        <fullName>Transposable element activator uncharacterized 12 kDa protein</fullName>
        <shortName>AC 12 kDa protein</shortName>
    </recommendedName>
</protein>
<comment type="miscellaneous">
    <text>This protein is coded by the transposable maize controlling element 'Activator' (Ac), which is able to activate chromosome breakage at a specific location.</text>
</comment>
<feature type="chain" id="PRO_0000066104" description="Transposable element activator uncharacterized 12 kDa protein">
    <location>
        <begin position="1"/>
        <end position="102"/>
    </location>
</feature>
<feature type="region of interest" description="Disordered" evidence="1">
    <location>
        <begin position="24"/>
        <end position="55"/>
    </location>
</feature>
<feature type="compositionally biased region" description="Basic residues" evidence="1">
    <location>
        <begin position="24"/>
        <end position="51"/>
    </location>
</feature>
<evidence type="ECO:0000256" key="1">
    <source>
        <dbReference type="SAM" id="MobiDB-lite"/>
    </source>
</evidence>
<name>YAC1_MAIZE</name>
<keyword id="KW-1185">Reference proteome</keyword>
<keyword id="KW-0814">Transposable element</keyword>
<organism>
    <name type="scientific">Zea mays</name>
    <name type="common">Maize</name>
    <dbReference type="NCBI Taxonomy" id="4577"/>
    <lineage>
        <taxon>Eukaryota</taxon>
        <taxon>Viridiplantae</taxon>
        <taxon>Streptophyta</taxon>
        <taxon>Embryophyta</taxon>
        <taxon>Tracheophyta</taxon>
        <taxon>Spermatophyta</taxon>
        <taxon>Magnoliopsida</taxon>
        <taxon>Liliopsida</taxon>
        <taxon>Poales</taxon>
        <taxon>Poaceae</taxon>
        <taxon>PACMAD clade</taxon>
        <taxon>Panicoideae</taxon>
        <taxon>Andropogonodae</taxon>
        <taxon>Andropogoneae</taxon>
        <taxon>Tripsacinae</taxon>
        <taxon>Zea</taxon>
    </lineage>
</organism>
<dbReference type="EMBL" id="X05424">
    <property type="protein sequence ID" value="CAA29006.1"/>
    <property type="molecule type" value="mRNA"/>
</dbReference>
<dbReference type="PIR" id="T02917">
    <property type="entry name" value="T02917"/>
</dbReference>
<dbReference type="MaizeGDB" id="69192"/>
<dbReference type="InParanoid" id="P08771"/>
<dbReference type="Proteomes" id="UP000007305">
    <property type="component" value="Unplaced"/>
</dbReference>
<accession>P08771</accession>
<proteinExistence type="predicted"/>
<sequence>MQMVQLQIRVKMIWLLFMNHNHNHNHNQNHNHSHNLNPKKKHHRRGQRSAHRMYGSISPRRKLKWRSMERNTFRYGDIATFLIARLSIGLRVIMEQADFEIT</sequence>
<reference key="1">
    <citation type="journal article" date="1987" name="EMBO J.">
        <title>Transcription of transposable element Activator (Ac) of Zea mays L.</title>
        <authorList>
            <person name="Kunze R."/>
            <person name="Stochaj U."/>
            <person name="Laufs J."/>
            <person name="Starlinger P."/>
        </authorList>
    </citation>
    <scope>NUCLEOTIDE SEQUENCE [MRNA]</scope>
</reference>